<feature type="chain" id="PRO_0000146052" description="Phosphoglycerate kinase">
    <location>
        <begin position="1"/>
        <end position="398"/>
    </location>
</feature>
<feature type="binding site" evidence="1">
    <location>
        <begin position="21"/>
        <end position="23"/>
    </location>
    <ligand>
        <name>substrate</name>
    </ligand>
</feature>
<feature type="binding site" evidence="1">
    <location>
        <position position="37"/>
    </location>
    <ligand>
        <name>substrate</name>
    </ligand>
</feature>
<feature type="binding site" evidence="1">
    <location>
        <begin position="60"/>
        <end position="63"/>
    </location>
    <ligand>
        <name>substrate</name>
    </ligand>
</feature>
<feature type="binding site" evidence="1">
    <location>
        <position position="117"/>
    </location>
    <ligand>
        <name>substrate</name>
    </ligand>
</feature>
<feature type="binding site" evidence="1">
    <location>
        <position position="157"/>
    </location>
    <ligand>
        <name>substrate</name>
    </ligand>
</feature>
<feature type="binding site" evidence="1">
    <location>
        <position position="332"/>
    </location>
    <ligand>
        <name>ATP</name>
        <dbReference type="ChEBI" id="CHEBI:30616"/>
    </ligand>
</feature>
<feature type="binding site" evidence="1">
    <location>
        <begin position="357"/>
        <end position="360"/>
    </location>
    <ligand>
        <name>ATP</name>
        <dbReference type="ChEBI" id="CHEBI:30616"/>
    </ligand>
</feature>
<keyword id="KW-0067">ATP-binding</keyword>
<keyword id="KW-0963">Cytoplasm</keyword>
<keyword id="KW-0324">Glycolysis</keyword>
<keyword id="KW-0418">Kinase</keyword>
<keyword id="KW-0547">Nucleotide-binding</keyword>
<keyword id="KW-1185">Reference proteome</keyword>
<keyword id="KW-0808">Transferase</keyword>
<protein>
    <recommendedName>
        <fullName evidence="1">Phosphoglycerate kinase</fullName>
        <ecNumber evidence="1">2.7.2.3</ecNumber>
    </recommendedName>
</protein>
<proteinExistence type="inferred from homology"/>
<sequence length="398" mass="41046">MAIRTLDDLAAANRAIGVRVDINSPLTAAGGLADDARLRAHVDTLAELLAADARVAVLAHQGRPGGDEFARLERHADRLDALLDAPVSYCDATFSTGARDAVADLAPGEAVVLENTRFYSEEYMAFAPERAADTALVDGLAPALDAYVNDAFAAAHRSQPSLVGFPEVLPSYAGRVMEAELDALSGVADTPTPRTYVVGGAKVPDSVEVAAHALSHGLADNVLVTGVVANVFLAATGVDLGRASTDFIHERDYGTEIARAADLLAAHNDALHLPVDVAVERDGARCELSTDALPPAGDEAVCDIGSDTVDAYADVLADSETVVVNGPAGVFEDDLFADGTRGVFDAASEVEHSIVGGGDTAAAIRRFDITGFDHVSTGGGAAINLLTDADLPAVAALR</sequence>
<accession>Q9HQD1</accession>
<name>PGK_HALSA</name>
<comment type="catalytic activity">
    <reaction evidence="1">
        <text>(2R)-3-phosphoglycerate + ATP = (2R)-3-phospho-glyceroyl phosphate + ADP</text>
        <dbReference type="Rhea" id="RHEA:14801"/>
        <dbReference type="ChEBI" id="CHEBI:30616"/>
        <dbReference type="ChEBI" id="CHEBI:57604"/>
        <dbReference type="ChEBI" id="CHEBI:58272"/>
        <dbReference type="ChEBI" id="CHEBI:456216"/>
        <dbReference type="EC" id="2.7.2.3"/>
    </reaction>
</comment>
<comment type="pathway">
    <text evidence="1">Carbohydrate degradation; glycolysis; pyruvate from D-glyceraldehyde 3-phosphate: step 2/5.</text>
</comment>
<comment type="subunit">
    <text evidence="1">Monomer.</text>
</comment>
<comment type="subcellular location">
    <subcellularLocation>
        <location evidence="1">Cytoplasm</location>
    </subcellularLocation>
</comment>
<comment type="similarity">
    <text evidence="1">Belongs to the phosphoglycerate kinase family.</text>
</comment>
<evidence type="ECO:0000255" key="1">
    <source>
        <dbReference type="HAMAP-Rule" id="MF_00145"/>
    </source>
</evidence>
<gene>
    <name evidence="1" type="primary">pgk</name>
    <name type="ordered locus">VNG_1216G</name>
</gene>
<dbReference type="EC" id="2.7.2.3" evidence="1"/>
<dbReference type="EMBL" id="AE004437">
    <property type="protein sequence ID" value="AAG19584.1"/>
    <property type="molecule type" value="Genomic_DNA"/>
</dbReference>
<dbReference type="PIR" id="D84277">
    <property type="entry name" value="D84277"/>
</dbReference>
<dbReference type="RefSeq" id="WP_010902880.1">
    <property type="nucleotide sequence ID" value="NC_002607.1"/>
</dbReference>
<dbReference type="SMR" id="Q9HQD1"/>
<dbReference type="FunCoup" id="Q9HQD1">
    <property type="interactions" value="123"/>
</dbReference>
<dbReference type="STRING" id="64091.VNG_1216G"/>
<dbReference type="PaxDb" id="64091-VNG_1216G"/>
<dbReference type="GeneID" id="68693984"/>
<dbReference type="KEGG" id="hal:VNG_1216G"/>
<dbReference type="PATRIC" id="fig|64091.14.peg.932"/>
<dbReference type="HOGENOM" id="CLU_025427_0_2_2"/>
<dbReference type="InParanoid" id="Q9HQD1"/>
<dbReference type="OrthoDB" id="6575at2157"/>
<dbReference type="PhylomeDB" id="Q9HQD1"/>
<dbReference type="UniPathway" id="UPA00109">
    <property type="reaction ID" value="UER00185"/>
</dbReference>
<dbReference type="Proteomes" id="UP000000554">
    <property type="component" value="Chromosome"/>
</dbReference>
<dbReference type="GO" id="GO:0005829">
    <property type="term" value="C:cytosol"/>
    <property type="evidence" value="ECO:0000318"/>
    <property type="project" value="GO_Central"/>
</dbReference>
<dbReference type="GO" id="GO:0043531">
    <property type="term" value="F:ADP binding"/>
    <property type="evidence" value="ECO:0000318"/>
    <property type="project" value="GO_Central"/>
</dbReference>
<dbReference type="GO" id="GO:0005524">
    <property type="term" value="F:ATP binding"/>
    <property type="evidence" value="ECO:0000318"/>
    <property type="project" value="GO_Central"/>
</dbReference>
<dbReference type="GO" id="GO:0004618">
    <property type="term" value="F:phosphoglycerate kinase activity"/>
    <property type="evidence" value="ECO:0000318"/>
    <property type="project" value="GO_Central"/>
</dbReference>
<dbReference type="GO" id="GO:0006094">
    <property type="term" value="P:gluconeogenesis"/>
    <property type="evidence" value="ECO:0000318"/>
    <property type="project" value="GO_Central"/>
</dbReference>
<dbReference type="GO" id="GO:0006096">
    <property type="term" value="P:glycolytic process"/>
    <property type="evidence" value="ECO:0000318"/>
    <property type="project" value="GO_Central"/>
</dbReference>
<dbReference type="FunFam" id="3.40.50.1260:FF:000006">
    <property type="entry name" value="Phosphoglycerate kinase"/>
    <property type="match status" value="1"/>
</dbReference>
<dbReference type="FunFam" id="3.40.50.1260:FF:000012">
    <property type="entry name" value="Phosphoglycerate kinase"/>
    <property type="match status" value="1"/>
</dbReference>
<dbReference type="Gene3D" id="3.40.50.1260">
    <property type="entry name" value="Phosphoglycerate kinase, N-terminal domain"/>
    <property type="match status" value="2"/>
</dbReference>
<dbReference type="HAMAP" id="MF_00145">
    <property type="entry name" value="Phosphoglyc_kinase"/>
    <property type="match status" value="1"/>
</dbReference>
<dbReference type="InterPro" id="IPR001576">
    <property type="entry name" value="Phosphoglycerate_kinase"/>
</dbReference>
<dbReference type="InterPro" id="IPR015824">
    <property type="entry name" value="Phosphoglycerate_kinase_N"/>
</dbReference>
<dbReference type="InterPro" id="IPR036043">
    <property type="entry name" value="Phosphoglycerate_kinase_sf"/>
</dbReference>
<dbReference type="PANTHER" id="PTHR11406">
    <property type="entry name" value="PHOSPHOGLYCERATE KINASE"/>
    <property type="match status" value="1"/>
</dbReference>
<dbReference type="PANTHER" id="PTHR11406:SF23">
    <property type="entry name" value="PHOSPHOGLYCERATE KINASE 1, CHLOROPLASTIC-RELATED"/>
    <property type="match status" value="1"/>
</dbReference>
<dbReference type="Pfam" id="PF00162">
    <property type="entry name" value="PGK"/>
    <property type="match status" value="1"/>
</dbReference>
<dbReference type="PIRSF" id="PIRSF000724">
    <property type="entry name" value="Pgk"/>
    <property type="match status" value="1"/>
</dbReference>
<dbReference type="PRINTS" id="PR00477">
    <property type="entry name" value="PHGLYCKINASE"/>
</dbReference>
<dbReference type="SUPFAM" id="SSF53748">
    <property type="entry name" value="Phosphoglycerate kinase"/>
    <property type="match status" value="1"/>
</dbReference>
<organism>
    <name type="scientific">Halobacterium salinarum (strain ATCC 700922 / JCM 11081 / NRC-1)</name>
    <name type="common">Halobacterium halobium</name>
    <dbReference type="NCBI Taxonomy" id="64091"/>
    <lineage>
        <taxon>Archaea</taxon>
        <taxon>Methanobacteriati</taxon>
        <taxon>Methanobacteriota</taxon>
        <taxon>Stenosarchaea group</taxon>
        <taxon>Halobacteria</taxon>
        <taxon>Halobacteriales</taxon>
        <taxon>Halobacteriaceae</taxon>
        <taxon>Halobacterium</taxon>
        <taxon>Halobacterium salinarum NRC-34001</taxon>
    </lineage>
</organism>
<reference key="1">
    <citation type="journal article" date="2000" name="Proc. Natl. Acad. Sci. U.S.A.">
        <title>Genome sequence of Halobacterium species NRC-1.</title>
        <authorList>
            <person name="Ng W.V."/>
            <person name="Kennedy S.P."/>
            <person name="Mahairas G.G."/>
            <person name="Berquist B."/>
            <person name="Pan M."/>
            <person name="Shukla H.D."/>
            <person name="Lasky S.R."/>
            <person name="Baliga N.S."/>
            <person name="Thorsson V."/>
            <person name="Sbrogna J."/>
            <person name="Swartzell S."/>
            <person name="Weir D."/>
            <person name="Hall J."/>
            <person name="Dahl T.A."/>
            <person name="Welti R."/>
            <person name="Goo Y.A."/>
            <person name="Leithauser B."/>
            <person name="Keller K."/>
            <person name="Cruz R."/>
            <person name="Danson M.J."/>
            <person name="Hough D.W."/>
            <person name="Maddocks D.G."/>
            <person name="Jablonski P.E."/>
            <person name="Krebs M.P."/>
            <person name="Angevine C.M."/>
            <person name="Dale H."/>
            <person name="Isenbarger T.A."/>
            <person name="Peck R.F."/>
            <person name="Pohlschroder M."/>
            <person name="Spudich J.L."/>
            <person name="Jung K.-H."/>
            <person name="Alam M."/>
            <person name="Freitas T."/>
            <person name="Hou S."/>
            <person name="Daniels C.J."/>
            <person name="Dennis P.P."/>
            <person name="Omer A.D."/>
            <person name="Ebhardt H."/>
            <person name="Lowe T.M."/>
            <person name="Liang P."/>
            <person name="Riley M."/>
            <person name="Hood L."/>
            <person name="DasSarma S."/>
        </authorList>
    </citation>
    <scope>NUCLEOTIDE SEQUENCE [LARGE SCALE GENOMIC DNA]</scope>
    <source>
        <strain>ATCC 700922 / JCM 11081 / NRC-1</strain>
    </source>
</reference>